<organism>
    <name type="scientific">Pseudomonas phage M6</name>
    <dbReference type="NCBI Taxonomy" id="2911432"/>
    <lineage>
        <taxon>Viruses</taxon>
        <taxon>Duplodnaviria</taxon>
        <taxon>Heunggongvirae</taxon>
        <taxon>Uroviricota</taxon>
        <taxon>Caudoviricetes</taxon>
        <taxon>Mesyanzhinovviridae</taxon>
        <taxon>Rabinowitzvirinae</taxon>
        <taxon>Yuavirus</taxon>
        <taxon>Pseudomonas virus M6</taxon>
    </lineage>
</organism>
<reference key="1">
    <citation type="journal article" date="2006" name="J. Bacteriol.">
        <title>Comparative genomic analysis of 18 Pseudomonas aeruginosa bacteriophages.</title>
        <authorList>
            <person name="Kwan T."/>
            <person name="Liu J."/>
            <person name="Dubow M."/>
            <person name="Gros P."/>
            <person name="Pelletier J."/>
        </authorList>
    </citation>
    <scope>NUCLEOTIDE SEQUENCE [LARGE SCALE GENOMIC DNA]</scope>
</reference>
<reference key="2">
    <citation type="journal article" date="2018" name="Proc. Natl. Acad. Sci. U.S.A.">
        <title>Identification and biosynthesis of thymidine hypermodifications in the genomic DNA of widespread bacterial viruses.</title>
        <authorList>
            <person name="Lee Y.J."/>
            <person name="Dai N."/>
            <person name="Walsh S.E."/>
            <person name="Mueller S."/>
            <person name="Fraser M.E."/>
            <person name="Kauffman K.M."/>
            <person name="Guan C."/>
            <person name="Correa I.R. Jr."/>
            <person name="Weigele P.R."/>
        </authorList>
    </citation>
    <scope>FUNCTION</scope>
</reference>
<reference key="3">
    <citation type="journal article" date="2021" name="Nucleic Acids Res.">
        <title>Pathways of thymidine hypermodification.</title>
        <authorList>
            <person name="Lee Y.J."/>
            <person name="Dai N."/>
            <person name="Mueller S.I."/>
            <person name="Guan C."/>
            <person name="Parker M.J."/>
            <person name="Fraser M.E."/>
            <person name="Walsh S.E."/>
            <person name="Sridar J."/>
            <person name="Mulholland A."/>
            <person name="Nayak K."/>
            <person name="Sun Z."/>
            <person name="Lin Y.C."/>
            <person name="Comb D.G."/>
            <person name="Marks K."/>
            <person name="Gonzalez R."/>
            <person name="Dowling D.P."/>
            <person name="Bandarian V."/>
            <person name="Saleh L."/>
            <person name="Correa I.R."/>
            <person name="Weigele P.R."/>
        </authorList>
    </citation>
    <scope>FUNCTION</scope>
    <scope>CATALYTIC ACTIVITY</scope>
</reference>
<proteinExistence type="evidence at protein level"/>
<dbReference type="EC" id="2.7.7.7" evidence="3"/>
<dbReference type="EMBL" id="DQ163916">
    <property type="status" value="NOT_ANNOTATED_CDS"/>
    <property type="molecule type" value="Genomic_DNA"/>
</dbReference>
<dbReference type="SMR" id="P0DTK4"/>
<dbReference type="GO" id="GO:0003677">
    <property type="term" value="F:DNA binding"/>
    <property type="evidence" value="ECO:0007669"/>
    <property type="project" value="InterPro"/>
</dbReference>
<dbReference type="GO" id="GO:0003887">
    <property type="term" value="F:DNA-directed DNA polymerase activity"/>
    <property type="evidence" value="ECO:0007669"/>
    <property type="project" value="UniProtKB-KW"/>
</dbReference>
<dbReference type="GO" id="GO:0006261">
    <property type="term" value="P:DNA-templated DNA replication"/>
    <property type="evidence" value="ECO:0007669"/>
    <property type="project" value="InterPro"/>
</dbReference>
<dbReference type="GO" id="GO:0006302">
    <property type="term" value="P:double-strand break repair"/>
    <property type="evidence" value="ECO:0007669"/>
    <property type="project" value="TreeGrafter"/>
</dbReference>
<dbReference type="GO" id="GO:0099018">
    <property type="term" value="P:symbiont-mediated evasion of host restriction-modification system"/>
    <property type="evidence" value="ECO:0007669"/>
    <property type="project" value="UniProtKB-KW"/>
</dbReference>
<dbReference type="GO" id="GO:0052170">
    <property type="term" value="P:symbiont-mediated suppression of host innate immune response"/>
    <property type="evidence" value="ECO:0007669"/>
    <property type="project" value="UniProtKB-KW"/>
</dbReference>
<dbReference type="GO" id="GO:0039693">
    <property type="term" value="P:viral DNA genome replication"/>
    <property type="evidence" value="ECO:0007669"/>
    <property type="project" value="UniProtKB-KW"/>
</dbReference>
<dbReference type="Gene3D" id="3.30.70.370">
    <property type="match status" value="1"/>
</dbReference>
<dbReference type="Gene3D" id="1.10.150.20">
    <property type="entry name" value="5' to 3' exonuclease, C-terminal subdomain"/>
    <property type="match status" value="1"/>
</dbReference>
<dbReference type="Gene3D" id="3.30.420.10">
    <property type="entry name" value="Ribonuclease H-like superfamily/Ribonuclease H"/>
    <property type="match status" value="1"/>
</dbReference>
<dbReference type="Gene3D" id="1.20.1060.10">
    <property type="entry name" value="Taq DNA Polymerase, Chain T, domain 4"/>
    <property type="match status" value="1"/>
</dbReference>
<dbReference type="InterPro" id="IPR019760">
    <property type="entry name" value="DNA-dir_DNA_pol_A_CS"/>
</dbReference>
<dbReference type="InterPro" id="IPR001098">
    <property type="entry name" value="DNA-dir_DNA_pol_A_palm_dom"/>
</dbReference>
<dbReference type="InterPro" id="IPR043502">
    <property type="entry name" value="DNA/RNA_pol_sf"/>
</dbReference>
<dbReference type="InterPro" id="IPR002298">
    <property type="entry name" value="DNA_polymerase_A"/>
</dbReference>
<dbReference type="InterPro" id="IPR012337">
    <property type="entry name" value="RNaseH-like_sf"/>
</dbReference>
<dbReference type="InterPro" id="IPR036397">
    <property type="entry name" value="RNaseH_sf"/>
</dbReference>
<dbReference type="PANTHER" id="PTHR10133">
    <property type="entry name" value="DNA POLYMERASE I"/>
    <property type="match status" value="1"/>
</dbReference>
<dbReference type="PANTHER" id="PTHR10133:SF62">
    <property type="entry name" value="DNA POLYMERASE THETA"/>
    <property type="match status" value="1"/>
</dbReference>
<dbReference type="Pfam" id="PF00476">
    <property type="entry name" value="DNA_pol_A"/>
    <property type="match status" value="2"/>
</dbReference>
<dbReference type="PRINTS" id="PR00868">
    <property type="entry name" value="DNAPOLI"/>
</dbReference>
<dbReference type="SMART" id="SM00482">
    <property type="entry name" value="POLAc"/>
    <property type="match status" value="1"/>
</dbReference>
<dbReference type="SUPFAM" id="SSF56672">
    <property type="entry name" value="DNA/RNA polymerases"/>
    <property type="match status" value="1"/>
</dbReference>
<dbReference type="SUPFAM" id="SSF53098">
    <property type="entry name" value="Ribonuclease H-like"/>
    <property type="match status" value="1"/>
</dbReference>
<dbReference type="PROSITE" id="PS00447">
    <property type="entry name" value="DNA_POLYMERASE_A"/>
    <property type="match status" value="1"/>
</dbReference>
<evidence type="ECO:0000256" key="1">
    <source>
        <dbReference type="SAM" id="MobiDB-lite"/>
    </source>
</evidence>
<evidence type="ECO:0000269" key="2">
    <source>
    </source>
</evidence>
<evidence type="ECO:0000269" key="3">
    <source>
    </source>
</evidence>
<evidence type="ECO:0000303" key="4">
    <source>
    </source>
</evidence>
<evidence type="ECO:0000305" key="5"/>
<feature type="chain" id="PRO_0000456271" description="DNA-directed DNA polymerase">
    <location>
        <begin position="1"/>
        <end position="664"/>
    </location>
</feature>
<feature type="region of interest" description="Disordered" evidence="1">
    <location>
        <begin position="352"/>
        <end position="378"/>
    </location>
</feature>
<protein>
    <recommendedName>
        <fullName evidence="4">DNA-directed DNA polymerase</fullName>
        <ecNumber evidence="3">2.7.7.7</ecNumber>
    </recommendedName>
</protein>
<sequence length="664" mass="74282">MSYLQPPLFTTVSSDWVAPDLSTLPSWEGAKRVAIDCETRDPDLRKLGPGAGRRPNSYITGISFAIEDGPGGYLPIRHEGGGNLPLEGVLAYLRAQAKVFTGDLVGANLPYDLDFLAGDGIEFERVRYFRDIQIADPLICELHDSYSMQAIAERWGFHGKDEALLRAAAVDYGIDPKKDMWMLPAKFVGKYAEEDTRLPLNILRRQEREIDEQDLWGVYNLESKLLPILTGLRRRGVRIDCDRLDMIERWALEKETEALAQVRSITGHRIAVGDVWKPEVIAPALEHIGIKLNKTSQGKPNIDKELLGSIDHPVADLLERARKVNKLRTTFASSVRDHMVNGRLHGTFNQLRRQKDDESDGTAGAAYGRLSSEHPNLQQQPARDEFAMMWRAIYLPEEGQHWASNDYSQQEPRMAVHYACLAKDLIGHQAWLSAIEARDKYRNDPNTDNHQMMADMAGIKRKDAKEIYLGLSYGMGGAKMCRKLGLPTMMAVRGPRFQLFDVNSPEGQRLVAEGARRFEAAGPEGQALLDTFDHKVPFIKKLAKACEARAKAVGYITTLSGRRCRFPKDKDGNYDWTHKGLNRLIQGSSADQTKMAMVACAEAGLDIIIQVHDEIAFSVHDMKEAAEAAHIMRTCTPLELPSKVDVEIGQSWGHSMGWDGNPPS</sequence>
<accession>P0DTK4</accession>
<organismHost>
    <name type="scientific">Pseudomonas aeruginosa</name>
    <dbReference type="NCBI Taxonomy" id="287"/>
</organismHost>
<comment type="function">
    <text evidence="2 3 5">DNA polymerase that replicates the viral genomic DNA (Probable). Also incorporates 5-hydroxymethyl-2'-deoxyuridine (5-hmdU) instead of dTMP into DNA during replication, as an early step in the pathway of thymidine hypermodifications of the viral genome (PubMed:34522950). As a final result of the pathway of hypermodification, 5-aminoethyl-2'-deoxyuridine (5-NedU) substitutes for about 30% of thymidines in the viral DNA (PubMed:29555775, PubMed:34522950). These modifications probably prevent degradation of viral genome by the host restriction-modification antiviral defense system (PubMed:34522950).</text>
</comment>
<comment type="catalytic activity">
    <reaction evidence="3">
        <text>DNA(n) + a 2'-deoxyribonucleoside 5'-triphosphate = DNA(n+1) + diphosphate</text>
        <dbReference type="Rhea" id="RHEA:22508"/>
        <dbReference type="Rhea" id="RHEA-COMP:17339"/>
        <dbReference type="Rhea" id="RHEA-COMP:17340"/>
        <dbReference type="ChEBI" id="CHEBI:33019"/>
        <dbReference type="ChEBI" id="CHEBI:61560"/>
        <dbReference type="ChEBI" id="CHEBI:173112"/>
        <dbReference type="EC" id="2.7.7.7"/>
    </reaction>
</comment>
<comment type="similarity">
    <text evidence="5">Belongs to the DNA polymerase type-A family. DpoZ subfamily.</text>
</comment>
<keyword id="KW-0235">DNA replication</keyword>
<keyword id="KW-0239">DNA-directed DNA polymerase</keyword>
<keyword id="KW-0945">Host-virus interaction</keyword>
<keyword id="KW-1090">Inhibition of host innate immune response by virus</keyword>
<keyword id="KW-0548">Nucleotidyltransferase</keyword>
<keyword id="KW-1258">Restriction-modification system evasion by virus</keyword>
<keyword id="KW-0808">Transferase</keyword>
<keyword id="KW-1194">Viral DNA replication</keyword>
<keyword id="KW-0899">Viral immunoevasion</keyword>
<gene>
    <name type="primary">gp62</name>
</gene>
<name>DPOLA_BPPM6</name>